<sequence length="417" mass="45282">MLKKDMNIADYDPELFNAIQNETLRQEEHIELIASENYTSPRVMQAQGSQLTNKYAEGYPGKRYYGGCEYVDVVETLAIERAKQLFGATYANVQPHSGSQANSAVYMALLKPGDTVLGMNLAHGGHLTHGSPVNFSGRLYNIIPYGIDESGKIDYDEMERLAVEHKPKMMIGGFSAYSGIVDWARMREIADKIGAYLFVDMAHVAGLIAAGVYPNPVPHAHVVTSTTHKTLAGPRGGIILSAADDEDLYKKLNSAVFPGGQGGPLMHVIAGKAVAFKEALEPEFKAYQQQVVKNAKAMVEVFLERGYKIVSGGTDNHLMLVDLIGRDLTGKEADAALGSANITVNKNSVPNDPRSPFVTSGVRIGTPAITRRGFKEAEAKELTGWICDILDDAHNPAVIERVKGQVLALCARFPVYG</sequence>
<organism>
    <name type="scientific">Shewanella sp. (strain MR-4)</name>
    <dbReference type="NCBI Taxonomy" id="60480"/>
    <lineage>
        <taxon>Bacteria</taxon>
        <taxon>Pseudomonadati</taxon>
        <taxon>Pseudomonadota</taxon>
        <taxon>Gammaproteobacteria</taxon>
        <taxon>Alteromonadales</taxon>
        <taxon>Shewanellaceae</taxon>
        <taxon>Shewanella</taxon>
    </lineage>
</organism>
<comment type="function">
    <text evidence="1">Catalyzes the reversible interconversion of serine and glycine with tetrahydrofolate (THF) serving as the one-carbon carrier. This reaction serves as the major source of one-carbon groups required for the biosynthesis of purines, thymidylate, methionine, and other important biomolecules. Also exhibits THF-independent aldolase activity toward beta-hydroxyamino acids, producing glycine and aldehydes, via a retro-aldol mechanism.</text>
</comment>
<comment type="catalytic activity">
    <reaction evidence="1">
        <text>(6R)-5,10-methylene-5,6,7,8-tetrahydrofolate + glycine + H2O = (6S)-5,6,7,8-tetrahydrofolate + L-serine</text>
        <dbReference type="Rhea" id="RHEA:15481"/>
        <dbReference type="ChEBI" id="CHEBI:15377"/>
        <dbReference type="ChEBI" id="CHEBI:15636"/>
        <dbReference type="ChEBI" id="CHEBI:33384"/>
        <dbReference type="ChEBI" id="CHEBI:57305"/>
        <dbReference type="ChEBI" id="CHEBI:57453"/>
        <dbReference type="EC" id="2.1.2.1"/>
    </reaction>
</comment>
<comment type="cofactor">
    <cofactor evidence="1">
        <name>pyridoxal 5'-phosphate</name>
        <dbReference type="ChEBI" id="CHEBI:597326"/>
    </cofactor>
</comment>
<comment type="pathway">
    <text evidence="1">One-carbon metabolism; tetrahydrofolate interconversion.</text>
</comment>
<comment type="pathway">
    <text evidence="1">Amino-acid biosynthesis; glycine biosynthesis; glycine from L-serine: step 1/1.</text>
</comment>
<comment type="subunit">
    <text evidence="1">Homodimer.</text>
</comment>
<comment type="subcellular location">
    <subcellularLocation>
        <location evidence="1">Cytoplasm</location>
    </subcellularLocation>
</comment>
<comment type="similarity">
    <text evidence="1">Belongs to the SHMT family.</text>
</comment>
<feature type="chain" id="PRO_1000006320" description="Serine hydroxymethyltransferase">
    <location>
        <begin position="1"/>
        <end position="417"/>
    </location>
</feature>
<feature type="binding site" evidence="1">
    <location>
        <position position="121"/>
    </location>
    <ligand>
        <name>(6S)-5,6,7,8-tetrahydrofolate</name>
        <dbReference type="ChEBI" id="CHEBI:57453"/>
    </ligand>
</feature>
<feature type="binding site" evidence="1">
    <location>
        <begin position="125"/>
        <end position="127"/>
    </location>
    <ligand>
        <name>(6S)-5,6,7,8-tetrahydrofolate</name>
        <dbReference type="ChEBI" id="CHEBI:57453"/>
    </ligand>
</feature>
<feature type="binding site" evidence="1">
    <location>
        <begin position="355"/>
        <end position="357"/>
    </location>
    <ligand>
        <name>(6S)-5,6,7,8-tetrahydrofolate</name>
        <dbReference type="ChEBI" id="CHEBI:57453"/>
    </ligand>
</feature>
<feature type="site" description="Plays an important role in substrate specificity" evidence="1">
    <location>
        <position position="228"/>
    </location>
</feature>
<feature type="modified residue" description="N6-(pyridoxal phosphate)lysine" evidence="1">
    <location>
        <position position="229"/>
    </location>
</feature>
<accession>Q0HL93</accession>
<name>GLYA_SHESM</name>
<protein>
    <recommendedName>
        <fullName evidence="1">Serine hydroxymethyltransferase</fullName>
        <shortName evidence="1">SHMT</shortName>
        <shortName evidence="1">Serine methylase</shortName>
        <ecNumber evidence="1">2.1.2.1</ecNumber>
    </recommendedName>
</protein>
<evidence type="ECO:0000255" key="1">
    <source>
        <dbReference type="HAMAP-Rule" id="MF_00051"/>
    </source>
</evidence>
<proteinExistence type="inferred from homology"/>
<keyword id="KW-0028">Amino-acid biosynthesis</keyword>
<keyword id="KW-0963">Cytoplasm</keyword>
<keyword id="KW-0554">One-carbon metabolism</keyword>
<keyword id="KW-0663">Pyridoxal phosphate</keyword>
<keyword id="KW-0808">Transferase</keyword>
<dbReference type="EC" id="2.1.2.1" evidence="1"/>
<dbReference type="EMBL" id="CP000446">
    <property type="protein sequence ID" value="ABI38174.1"/>
    <property type="molecule type" value="Genomic_DNA"/>
</dbReference>
<dbReference type="RefSeq" id="WP_011621885.1">
    <property type="nucleotide sequence ID" value="NC_008321.1"/>
</dbReference>
<dbReference type="SMR" id="Q0HL93"/>
<dbReference type="KEGG" id="she:Shewmr4_1094"/>
<dbReference type="HOGENOM" id="CLU_022477_2_1_6"/>
<dbReference type="UniPathway" id="UPA00193"/>
<dbReference type="UniPathway" id="UPA00288">
    <property type="reaction ID" value="UER01023"/>
</dbReference>
<dbReference type="GO" id="GO:0005829">
    <property type="term" value="C:cytosol"/>
    <property type="evidence" value="ECO:0007669"/>
    <property type="project" value="TreeGrafter"/>
</dbReference>
<dbReference type="GO" id="GO:0004372">
    <property type="term" value="F:glycine hydroxymethyltransferase activity"/>
    <property type="evidence" value="ECO:0007669"/>
    <property type="project" value="UniProtKB-UniRule"/>
</dbReference>
<dbReference type="GO" id="GO:0030170">
    <property type="term" value="F:pyridoxal phosphate binding"/>
    <property type="evidence" value="ECO:0007669"/>
    <property type="project" value="UniProtKB-UniRule"/>
</dbReference>
<dbReference type="GO" id="GO:0019264">
    <property type="term" value="P:glycine biosynthetic process from serine"/>
    <property type="evidence" value="ECO:0007669"/>
    <property type="project" value="UniProtKB-UniRule"/>
</dbReference>
<dbReference type="GO" id="GO:0035999">
    <property type="term" value="P:tetrahydrofolate interconversion"/>
    <property type="evidence" value="ECO:0007669"/>
    <property type="project" value="UniProtKB-UniRule"/>
</dbReference>
<dbReference type="CDD" id="cd00378">
    <property type="entry name" value="SHMT"/>
    <property type="match status" value="1"/>
</dbReference>
<dbReference type="FunFam" id="3.40.640.10:FF:000001">
    <property type="entry name" value="Serine hydroxymethyltransferase"/>
    <property type="match status" value="1"/>
</dbReference>
<dbReference type="FunFam" id="3.90.1150.10:FF:000003">
    <property type="entry name" value="Serine hydroxymethyltransferase"/>
    <property type="match status" value="1"/>
</dbReference>
<dbReference type="Gene3D" id="3.90.1150.10">
    <property type="entry name" value="Aspartate Aminotransferase, domain 1"/>
    <property type="match status" value="1"/>
</dbReference>
<dbReference type="Gene3D" id="3.40.640.10">
    <property type="entry name" value="Type I PLP-dependent aspartate aminotransferase-like (Major domain)"/>
    <property type="match status" value="1"/>
</dbReference>
<dbReference type="HAMAP" id="MF_00051">
    <property type="entry name" value="SHMT"/>
    <property type="match status" value="1"/>
</dbReference>
<dbReference type="InterPro" id="IPR015424">
    <property type="entry name" value="PyrdxlP-dep_Trfase"/>
</dbReference>
<dbReference type="InterPro" id="IPR015421">
    <property type="entry name" value="PyrdxlP-dep_Trfase_major"/>
</dbReference>
<dbReference type="InterPro" id="IPR015422">
    <property type="entry name" value="PyrdxlP-dep_Trfase_small"/>
</dbReference>
<dbReference type="InterPro" id="IPR001085">
    <property type="entry name" value="Ser_HO-MeTrfase"/>
</dbReference>
<dbReference type="InterPro" id="IPR049943">
    <property type="entry name" value="Ser_HO-MeTrfase-like"/>
</dbReference>
<dbReference type="InterPro" id="IPR019798">
    <property type="entry name" value="Ser_HO-MeTrfase_PLP_BS"/>
</dbReference>
<dbReference type="InterPro" id="IPR039429">
    <property type="entry name" value="SHMT-like_dom"/>
</dbReference>
<dbReference type="NCBIfam" id="NF000586">
    <property type="entry name" value="PRK00011.1"/>
    <property type="match status" value="1"/>
</dbReference>
<dbReference type="PANTHER" id="PTHR11680">
    <property type="entry name" value="SERINE HYDROXYMETHYLTRANSFERASE"/>
    <property type="match status" value="1"/>
</dbReference>
<dbReference type="PANTHER" id="PTHR11680:SF50">
    <property type="entry name" value="SERINE HYDROXYMETHYLTRANSFERASE"/>
    <property type="match status" value="1"/>
</dbReference>
<dbReference type="Pfam" id="PF00464">
    <property type="entry name" value="SHMT"/>
    <property type="match status" value="1"/>
</dbReference>
<dbReference type="PIRSF" id="PIRSF000412">
    <property type="entry name" value="SHMT"/>
    <property type="match status" value="1"/>
</dbReference>
<dbReference type="SUPFAM" id="SSF53383">
    <property type="entry name" value="PLP-dependent transferases"/>
    <property type="match status" value="1"/>
</dbReference>
<dbReference type="PROSITE" id="PS00096">
    <property type="entry name" value="SHMT"/>
    <property type="match status" value="1"/>
</dbReference>
<gene>
    <name evidence="1" type="primary">glyA</name>
    <name type="ordered locus">Shewmr4_1094</name>
</gene>
<reference key="1">
    <citation type="submission" date="2006-08" db="EMBL/GenBank/DDBJ databases">
        <title>Complete sequence of Shewanella sp. MR-4.</title>
        <authorList>
            <consortium name="US DOE Joint Genome Institute"/>
            <person name="Copeland A."/>
            <person name="Lucas S."/>
            <person name="Lapidus A."/>
            <person name="Barry K."/>
            <person name="Detter J.C."/>
            <person name="Glavina del Rio T."/>
            <person name="Hammon N."/>
            <person name="Israni S."/>
            <person name="Dalin E."/>
            <person name="Tice H."/>
            <person name="Pitluck S."/>
            <person name="Kiss H."/>
            <person name="Brettin T."/>
            <person name="Bruce D."/>
            <person name="Han C."/>
            <person name="Tapia R."/>
            <person name="Gilna P."/>
            <person name="Schmutz J."/>
            <person name="Larimer F."/>
            <person name="Land M."/>
            <person name="Hauser L."/>
            <person name="Kyrpides N."/>
            <person name="Mikhailova N."/>
            <person name="Nealson K."/>
            <person name="Konstantinidis K."/>
            <person name="Klappenbach J."/>
            <person name="Tiedje J."/>
            <person name="Richardson P."/>
        </authorList>
    </citation>
    <scope>NUCLEOTIDE SEQUENCE [LARGE SCALE GENOMIC DNA]</scope>
    <source>
        <strain>MR-4</strain>
    </source>
</reference>